<evidence type="ECO:0000255" key="1">
    <source>
        <dbReference type="HAMAP-Rule" id="MF_00005"/>
    </source>
</evidence>
<keyword id="KW-0028">Amino-acid biosynthesis</keyword>
<keyword id="KW-0055">Arginine biosynthesis</keyword>
<keyword id="KW-0067">ATP-binding</keyword>
<keyword id="KW-0963">Cytoplasm</keyword>
<keyword id="KW-0436">Ligase</keyword>
<keyword id="KW-0547">Nucleotide-binding</keyword>
<keyword id="KW-1185">Reference proteome</keyword>
<reference key="1">
    <citation type="journal article" date="2002" name="Nature">
        <title>Comparison of the genomes of two Xanthomonas pathogens with differing host specificities.</title>
        <authorList>
            <person name="da Silva A.C.R."/>
            <person name="Ferro J.A."/>
            <person name="Reinach F.C."/>
            <person name="Farah C.S."/>
            <person name="Furlan L.R."/>
            <person name="Quaggio R.B."/>
            <person name="Monteiro-Vitorello C.B."/>
            <person name="Van Sluys M.A."/>
            <person name="Almeida N.F. Jr."/>
            <person name="Alves L.M.C."/>
            <person name="do Amaral A.M."/>
            <person name="Bertolini M.C."/>
            <person name="Camargo L.E.A."/>
            <person name="Camarotte G."/>
            <person name="Cannavan F."/>
            <person name="Cardozo J."/>
            <person name="Chambergo F."/>
            <person name="Ciapina L.P."/>
            <person name="Cicarelli R.M.B."/>
            <person name="Coutinho L.L."/>
            <person name="Cursino-Santos J.R."/>
            <person name="El-Dorry H."/>
            <person name="Faria J.B."/>
            <person name="Ferreira A.J.S."/>
            <person name="Ferreira R.C.C."/>
            <person name="Ferro M.I.T."/>
            <person name="Formighieri E.F."/>
            <person name="Franco M.C."/>
            <person name="Greggio C.C."/>
            <person name="Gruber A."/>
            <person name="Katsuyama A.M."/>
            <person name="Kishi L.T."/>
            <person name="Leite R.P."/>
            <person name="Lemos E.G.M."/>
            <person name="Lemos M.V.F."/>
            <person name="Locali E.C."/>
            <person name="Machado M.A."/>
            <person name="Madeira A.M.B.N."/>
            <person name="Martinez-Rossi N.M."/>
            <person name="Martins E.C."/>
            <person name="Meidanis J."/>
            <person name="Menck C.F.M."/>
            <person name="Miyaki C.Y."/>
            <person name="Moon D.H."/>
            <person name="Moreira L.M."/>
            <person name="Novo M.T.M."/>
            <person name="Okura V.K."/>
            <person name="Oliveira M.C."/>
            <person name="Oliveira V.R."/>
            <person name="Pereira H.A."/>
            <person name="Rossi A."/>
            <person name="Sena J.A.D."/>
            <person name="Silva C."/>
            <person name="de Souza R.F."/>
            <person name="Spinola L.A.F."/>
            <person name="Takita M.A."/>
            <person name="Tamura R.E."/>
            <person name="Teixeira E.C."/>
            <person name="Tezza R.I.D."/>
            <person name="Trindade dos Santos M."/>
            <person name="Truffi D."/>
            <person name="Tsai S.M."/>
            <person name="White F.F."/>
            <person name="Setubal J.C."/>
            <person name="Kitajima J.P."/>
        </authorList>
    </citation>
    <scope>NUCLEOTIDE SEQUENCE [LARGE SCALE GENOMIC DNA]</scope>
    <source>
        <strain>ATCC 33913 / DSM 3586 / NCPPB 528 / LMG 568 / P 25</strain>
    </source>
</reference>
<gene>
    <name evidence="1" type="primary">argG</name>
    <name type="ordered locus">XCC2247</name>
</gene>
<name>ASSY_XANCP</name>
<sequence>MSSKDIVLAFSGGLDTSFCIPYLQERGYAVHTVFADTGGVDAEERDFIEKRAAELGAASHVTVDGGPAIWEGFVKPFVWAGEGYQGQYPLLVSDRYLIVDAALKRAEELGTRIIAHGCTGMGNDQVRFDLAVKALGDYQIVAPIREIQKEHTQTRAYEQKYLEERGFGVRAKQKAYTINENLLGVTMSGGEIDRWEAPGEGARGWCAPRSAWPTEALTVTLKFVEGEAVALDGKALPGAQILAKLNTLFAQYGVGRGVYTGDTVIGLKGRIVFEAPGLISLLTAHRALEDAVLTKQQNRFKPDVARKWVELVYEGFYHDPLKTDIEAFLKSSQSKVNGEVTLETRGGRVDAVAVRSPHLLNAKGATYAQSADWGVEEAEGFIKLFGMSSTLYAQVNR</sequence>
<protein>
    <recommendedName>
        <fullName evidence="1">Argininosuccinate synthase</fullName>
        <ecNumber evidence="1">6.3.4.5</ecNumber>
    </recommendedName>
    <alternativeName>
        <fullName evidence="1">Citrulline--aspartate ligase</fullName>
    </alternativeName>
</protein>
<proteinExistence type="inferred from homology"/>
<accession>Q8P8J4</accession>
<organism>
    <name type="scientific">Xanthomonas campestris pv. campestris (strain ATCC 33913 / DSM 3586 / NCPPB 528 / LMG 568 / P 25)</name>
    <dbReference type="NCBI Taxonomy" id="190485"/>
    <lineage>
        <taxon>Bacteria</taxon>
        <taxon>Pseudomonadati</taxon>
        <taxon>Pseudomonadota</taxon>
        <taxon>Gammaproteobacteria</taxon>
        <taxon>Lysobacterales</taxon>
        <taxon>Lysobacteraceae</taxon>
        <taxon>Xanthomonas</taxon>
    </lineage>
</organism>
<dbReference type="EC" id="6.3.4.5" evidence="1"/>
<dbReference type="EMBL" id="AE008922">
    <property type="protein sequence ID" value="AAM41526.1"/>
    <property type="molecule type" value="Genomic_DNA"/>
</dbReference>
<dbReference type="RefSeq" id="NP_637602.1">
    <property type="nucleotide sequence ID" value="NC_003902.1"/>
</dbReference>
<dbReference type="RefSeq" id="WP_011037391.1">
    <property type="nucleotide sequence ID" value="NC_003902.1"/>
</dbReference>
<dbReference type="SMR" id="Q8P8J4"/>
<dbReference type="STRING" id="190485.XCC2247"/>
<dbReference type="EnsemblBacteria" id="AAM41526">
    <property type="protein sequence ID" value="AAM41526"/>
    <property type="gene ID" value="XCC2247"/>
</dbReference>
<dbReference type="KEGG" id="xcc:XCC2247"/>
<dbReference type="PATRIC" id="fig|190485.4.peg.2397"/>
<dbReference type="eggNOG" id="COG0137">
    <property type="taxonomic scope" value="Bacteria"/>
</dbReference>
<dbReference type="HOGENOM" id="CLU_032784_0_0_6"/>
<dbReference type="OrthoDB" id="9801641at2"/>
<dbReference type="UniPathway" id="UPA00068">
    <property type="reaction ID" value="UER00113"/>
</dbReference>
<dbReference type="Proteomes" id="UP000001010">
    <property type="component" value="Chromosome"/>
</dbReference>
<dbReference type="GO" id="GO:0005737">
    <property type="term" value="C:cytoplasm"/>
    <property type="evidence" value="ECO:0000318"/>
    <property type="project" value="GO_Central"/>
</dbReference>
<dbReference type="GO" id="GO:0004055">
    <property type="term" value="F:argininosuccinate synthase activity"/>
    <property type="evidence" value="ECO:0000318"/>
    <property type="project" value="GO_Central"/>
</dbReference>
<dbReference type="GO" id="GO:0005524">
    <property type="term" value="F:ATP binding"/>
    <property type="evidence" value="ECO:0007669"/>
    <property type="project" value="UniProtKB-UniRule"/>
</dbReference>
<dbReference type="GO" id="GO:0000053">
    <property type="term" value="P:argininosuccinate metabolic process"/>
    <property type="evidence" value="ECO:0000318"/>
    <property type="project" value="GO_Central"/>
</dbReference>
<dbReference type="GO" id="GO:0006526">
    <property type="term" value="P:L-arginine biosynthetic process"/>
    <property type="evidence" value="ECO:0000318"/>
    <property type="project" value="GO_Central"/>
</dbReference>
<dbReference type="GO" id="GO:0000050">
    <property type="term" value="P:urea cycle"/>
    <property type="evidence" value="ECO:0000318"/>
    <property type="project" value="GO_Central"/>
</dbReference>
<dbReference type="CDD" id="cd01999">
    <property type="entry name" value="ASS"/>
    <property type="match status" value="1"/>
</dbReference>
<dbReference type="FunFam" id="3.40.50.620:FF:000141">
    <property type="entry name" value="Argininosuccinate synthase"/>
    <property type="match status" value="1"/>
</dbReference>
<dbReference type="Gene3D" id="3.90.1260.10">
    <property type="entry name" value="Argininosuccinate synthetase, chain A, domain 2"/>
    <property type="match status" value="1"/>
</dbReference>
<dbReference type="Gene3D" id="3.40.50.620">
    <property type="entry name" value="HUPs"/>
    <property type="match status" value="1"/>
</dbReference>
<dbReference type="HAMAP" id="MF_00005">
    <property type="entry name" value="Arg_succ_synth_type1"/>
    <property type="match status" value="1"/>
</dbReference>
<dbReference type="InterPro" id="IPR048268">
    <property type="entry name" value="Arginosuc_syn_C"/>
</dbReference>
<dbReference type="InterPro" id="IPR048267">
    <property type="entry name" value="Arginosuc_syn_N"/>
</dbReference>
<dbReference type="InterPro" id="IPR001518">
    <property type="entry name" value="Arginosuc_synth"/>
</dbReference>
<dbReference type="InterPro" id="IPR018223">
    <property type="entry name" value="Arginosuc_synth_CS"/>
</dbReference>
<dbReference type="InterPro" id="IPR023434">
    <property type="entry name" value="Arginosuc_synth_type_1_subfam"/>
</dbReference>
<dbReference type="InterPro" id="IPR024074">
    <property type="entry name" value="AS_cat/multimer_dom_body"/>
</dbReference>
<dbReference type="InterPro" id="IPR014729">
    <property type="entry name" value="Rossmann-like_a/b/a_fold"/>
</dbReference>
<dbReference type="NCBIfam" id="TIGR00032">
    <property type="entry name" value="argG"/>
    <property type="match status" value="1"/>
</dbReference>
<dbReference type="NCBIfam" id="NF003385">
    <property type="entry name" value="PRK04527.1"/>
    <property type="match status" value="1"/>
</dbReference>
<dbReference type="PANTHER" id="PTHR11587">
    <property type="entry name" value="ARGININOSUCCINATE SYNTHASE"/>
    <property type="match status" value="1"/>
</dbReference>
<dbReference type="PANTHER" id="PTHR11587:SF2">
    <property type="entry name" value="ARGININOSUCCINATE SYNTHASE"/>
    <property type="match status" value="1"/>
</dbReference>
<dbReference type="Pfam" id="PF20979">
    <property type="entry name" value="Arginosuc_syn_C"/>
    <property type="match status" value="1"/>
</dbReference>
<dbReference type="Pfam" id="PF00764">
    <property type="entry name" value="Arginosuc_synth"/>
    <property type="match status" value="1"/>
</dbReference>
<dbReference type="SUPFAM" id="SSF52402">
    <property type="entry name" value="Adenine nucleotide alpha hydrolases-like"/>
    <property type="match status" value="1"/>
</dbReference>
<dbReference type="SUPFAM" id="SSF69864">
    <property type="entry name" value="Argininosuccinate synthetase, C-terminal domain"/>
    <property type="match status" value="1"/>
</dbReference>
<dbReference type="PROSITE" id="PS00564">
    <property type="entry name" value="ARGININOSUCCIN_SYN_1"/>
    <property type="match status" value="1"/>
</dbReference>
<dbReference type="PROSITE" id="PS00565">
    <property type="entry name" value="ARGININOSUCCIN_SYN_2"/>
    <property type="match status" value="1"/>
</dbReference>
<feature type="chain" id="PRO_0000148667" description="Argininosuccinate synthase">
    <location>
        <begin position="1"/>
        <end position="397"/>
    </location>
</feature>
<feature type="binding site" evidence="1">
    <location>
        <begin position="9"/>
        <end position="17"/>
    </location>
    <ligand>
        <name>ATP</name>
        <dbReference type="ChEBI" id="CHEBI:30616"/>
    </ligand>
</feature>
<feature type="binding site" evidence="1">
    <location>
        <position position="35"/>
    </location>
    <ligand>
        <name>ATP</name>
        <dbReference type="ChEBI" id="CHEBI:30616"/>
    </ligand>
</feature>
<feature type="binding site" evidence="1">
    <location>
        <position position="88"/>
    </location>
    <ligand>
        <name>L-citrulline</name>
        <dbReference type="ChEBI" id="CHEBI:57743"/>
    </ligand>
</feature>
<feature type="binding site" evidence="1">
    <location>
        <position position="93"/>
    </location>
    <ligand>
        <name>L-citrulline</name>
        <dbReference type="ChEBI" id="CHEBI:57743"/>
    </ligand>
</feature>
<feature type="binding site" evidence="1">
    <location>
        <position position="117"/>
    </location>
    <ligand>
        <name>ATP</name>
        <dbReference type="ChEBI" id="CHEBI:30616"/>
    </ligand>
</feature>
<feature type="binding site" evidence="1">
    <location>
        <position position="119"/>
    </location>
    <ligand>
        <name>L-aspartate</name>
        <dbReference type="ChEBI" id="CHEBI:29991"/>
    </ligand>
</feature>
<feature type="binding site" evidence="1">
    <location>
        <position position="123"/>
    </location>
    <ligand>
        <name>L-aspartate</name>
        <dbReference type="ChEBI" id="CHEBI:29991"/>
    </ligand>
</feature>
<feature type="binding site" evidence="1">
    <location>
        <position position="123"/>
    </location>
    <ligand>
        <name>L-citrulline</name>
        <dbReference type="ChEBI" id="CHEBI:57743"/>
    </ligand>
</feature>
<feature type="binding site" evidence="1">
    <location>
        <position position="124"/>
    </location>
    <ligand>
        <name>L-aspartate</name>
        <dbReference type="ChEBI" id="CHEBI:29991"/>
    </ligand>
</feature>
<feature type="binding site" evidence="1">
    <location>
        <position position="127"/>
    </location>
    <ligand>
        <name>L-citrulline</name>
        <dbReference type="ChEBI" id="CHEBI:57743"/>
    </ligand>
</feature>
<comment type="catalytic activity">
    <reaction evidence="1">
        <text>L-citrulline + L-aspartate + ATP = 2-(N(omega)-L-arginino)succinate + AMP + diphosphate + H(+)</text>
        <dbReference type="Rhea" id="RHEA:10932"/>
        <dbReference type="ChEBI" id="CHEBI:15378"/>
        <dbReference type="ChEBI" id="CHEBI:29991"/>
        <dbReference type="ChEBI" id="CHEBI:30616"/>
        <dbReference type="ChEBI" id="CHEBI:33019"/>
        <dbReference type="ChEBI" id="CHEBI:57472"/>
        <dbReference type="ChEBI" id="CHEBI:57743"/>
        <dbReference type="ChEBI" id="CHEBI:456215"/>
        <dbReference type="EC" id="6.3.4.5"/>
    </reaction>
</comment>
<comment type="pathway">
    <text evidence="1">Amino-acid biosynthesis; L-arginine biosynthesis; L-arginine from L-ornithine and carbamoyl phosphate: step 2/3.</text>
</comment>
<comment type="subunit">
    <text evidence="1">Homotetramer.</text>
</comment>
<comment type="subcellular location">
    <subcellularLocation>
        <location evidence="1">Cytoplasm</location>
    </subcellularLocation>
</comment>
<comment type="similarity">
    <text evidence="1">Belongs to the argininosuccinate synthase family. Type 1 subfamily.</text>
</comment>